<organism>
    <name type="scientific">Methanocaldococcus jannaschii (strain ATCC 43067 / DSM 2661 / JAL-1 / JCM 10045 / NBRC 100440)</name>
    <name type="common">Methanococcus jannaschii</name>
    <dbReference type="NCBI Taxonomy" id="243232"/>
    <lineage>
        <taxon>Archaea</taxon>
        <taxon>Methanobacteriati</taxon>
        <taxon>Methanobacteriota</taxon>
        <taxon>Methanomada group</taxon>
        <taxon>Methanococci</taxon>
        <taxon>Methanococcales</taxon>
        <taxon>Methanocaldococcaceae</taxon>
        <taxon>Methanocaldococcus</taxon>
    </lineage>
</organism>
<feature type="chain" id="PRO_0000160600" description="Iron-sulfur flavoprotein MJ1083">
    <location>
        <begin position="1"/>
        <end position="193"/>
    </location>
</feature>
<feature type="binding site" evidence="1">
    <location>
        <position position="47"/>
    </location>
    <ligand>
        <name>[4Fe-4S] cluster</name>
        <dbReference type="ChEBI" id="CHEBI:49883"/>
    </ligand>
</feature>
<feature type="binding site" evidence="1">
    <location>
        <position position="50"/>
    </location>
    <ligand>
        <name>[4Fe-4S] cluster</name>
        <dbReference type="ChEBI" id="CHEBI:49883"/>
    </ligand>
</feature>
<feature type="binding site" evidence="1">
    <location>
        <position position="53"/>
    </location>
    <ligand>
        <name>[4Fe-4S] cluster</name>
        <dbReference type="ChEBI" id="CHEBI:49883"/>
    </ligand>
</feature>
<feature type="binding site" evidence="1">
    <location>
        <position position="59"/>
    </location>
    <ligand>
        <name>[4Fe-4S] cluster</name>
        <dbReference type="ChEBI" id="CHEBI:49883"/>
    </ligand>
</feature>
<gene>
    <name type="ordered locus">MJ1083</name>
</gene>
<accession>Q58483</accession>
<sequence>MKVIGISGSPRPEGNTTLLVREALNAIAEEGIETEFISLADKELNPCIGCNMCKEEGKCPIIDDVDEILKKMKEADGIILGSPVYFGGVSAQLKMLMDRSRPLRIGFQLRNKVGGAVAVGASRNGGQETTIQQIHNFFLIHSMIVVGDNDPTAHYGGTGVGKAPGDCKNDDIGLETARNLGKKVAEVVKLIKK</sequence>
<evidence type="ECO:0000250" key="1"/>
<evidence type="ECO:0000269" key="2">
    <source>
    </source>
</evidence>
<evidence type="ECO:0000305" key="3"/>
<evidence type="ECO:0000305" key="4">
    <source>
    </source>
</evidence>
<protein>
    <recommendedName>
        <fullName>Iron-sulfur flavoprotein MJ1083</fullName>
    </recommendedName>
    <alternativeName>
        <fullName>Isf-2</fullName>
    </alternativeName>
    <alternativeName>
        <fullName>MCJ-2</fullName>
        <shortName>Mj2</shortName>
    </alternativeName>
</protein>
<proteinExistence type="evidence at protein level"/>
<keyword id="KW-0004">4Fe-4S</keyword>
<keyword id="KW-0903">Direct protein sequencing</keyword>
<keyword id="KW-0285">Flavoprotein</keyword>
<keyword id="KW-0288">FMN</keyword>
<keyword id="KW-0408">Iron</keyword>
<keyword id="KW-0411">Iron-sulfur</keyword>
<keyword id="KW-0479">Metal-binding</keyword>
<keyword id="KW-1185">Reference proteome</keyword>
<name>ISF2_METJA</name>
<comment type="function">
    <text>Redox-active protein probably involved in electron transport.</text>
</comment>
<comment type="cofactor">
    <cofactor evidence="2">
        <name>FMN</name>
        <dbReference type="ChEBI" id="CHEBI:58210"/>
    </cofactor>
    <text evidence="2">Binds 1 FMN per subunit.</text>
</comment>
<comment type="cofactor">
    <cofactor evidence="4">
        <name>[4Fe-4S] cluster</name>
        <dbReference type="ChEBI" id="CHEBI:49883"/>
    </cofactor>
    <text evidence="4">Binds 1 [4Fe-4S] cluster per subunit.</text>
</comment>
<comment type="subunit">
    <text>Homodimer.</text>
</comment>
<comment type="similarity">
    <text evidence="3">Belongs to the SsuE family. Isf subfamily.</text>
</comment>
<reference key="1">
    <citation type="journal article" date="1996" name="Science">
        <title>Complete genome sequence of the methanogenic archaeon, Methanococcus jannaschii.</title>
        <authorList>
            <person name="Bult C.J."/>
            <person name="White O."/>
            <person name="Olsen G.J."/>
            <person name="Zhou L."/>
            <person name="Fleischmann R.D."/>
            <person name="Sutton G.G."/>
            <person name="Blake J.A."/>
            <person name="FitzGerald L.M."/>
            <person name="Clayton R.A."/>
            <person name="Gocayne J.D."/>
            <person name="Kerlavage A.R."/>
            <person name="Dougherty B.A."/>
            <person name="Tomb J.-F."/>
            <person name="Adams M.D."/>
            <person name="Reich C.I."/>
            <person name="Overbeek R."/>
            <person name="Kirkness E.F."/>
            <person name="Weinstock K.G."/>
            <person name="Merrick J.M."/>
            <person name="Glodek A."/>
            <person name="Scott J.L."/>
            <person name="Geoghagen N.S.M."/>
            <person name="Weidman J.F."/>
            <person name="Fuhrmann J.L."/>
            <person name="Nguyen D."/>
            <person name="Utterback T.R."/>
            <person name="Kelley J.M."/>
            <person name="Peterson J.D."/>
            <person name="Sadow P.W."/>
            <person name="Hanna M.C."/>
            <person name="Cotton M.D."/>
            <person name="Roberts K.M."/>
            <person name="Hurst M.A."/>
            <person name="Kaine B.P."/>
            <person name="Borodovsky M."/>
            <person name="Klenk H.-P."/>
            <person name="Fraser C.M."/>
            <person name="Smith H.O."/>
            <person name="Woese C.R."/>
            <person name="Venter J.C."/>
        </authorList>
    </citation>
    <scope>NUCLEOTIDE SEQUENCE [LARGE SCALE GENOMIC DNA]</scope>
    <source>
        <strain>ATCC 43067 / DSM 2661 / JAL-1 / JCM 10045 / NBRC 100440</strain>
    </source>
</reference>
<reference key="2">
    <citation type="journal article" date="2001" name="J. Bacteriol.">
        <title>Iron-sulfur flavoprotein (Isf) from Methanosarcina thermophila is the prototype of a widely distributed family.</title>
        <authorList>
            <person name="Zhao T."/>
            <person name="Cruz F."/>
            <person name="Ferry J.G."/>
        </authorList>
    </citation>
    <scope>PROTEIN SEQUENCE OF N-TERMINUS</scope>
    <scope>COFACTOR</scope>
    <scope>IRON-SULFUR CLUSTER</scope>
</reference>
<reference key="3">
    <citation type="journal article" date="2000" name="J. Bacteriol.">
        <title>Site-specific mutational analysis of a novel cysteine motif proposed to ligate the 4Fe-4S cluster in the iron-sulfur flavoprotein of the thermophilic methanoarchaeon Methanosarcina thermophila.</title>
        <authorList>
            <person name="Leartsakulpanich U."/>
            <person name="Antonkine M.L."/>
            <person name="Ferry J.G."/>
        </authorList>
    </citation>
    <scope>PROTEIN FAMILY</scope>
</reference>
<dbReference type="EMBL" id="L77117">
    <property type="protein sequence ID" value="AAB99085.1"/>
    <property type="molecule type" value="Genomic_DNA"/>
</dbReference>
<dbReference type="PIR" id="B64435">
    <property type="entry name" value="B64435"/>
</dbReference>
<dbReference type="RefSeq" id="WP_010870595.1">
    <property type="nucleotide sequence ID" value="NC_000909.1"/>
</dbReference>
<dbReference type="SMR" id="Q58483"/>
<dbReference type="FunCoup" id="Q58483">
    <property type="interactions" value="5"/>
</dbReference>
<dbReference type="STRING" id="243232.MJ_1083"/>
<dbReference type="PaxDb" id="243232-MJ_1083"/>
<dbReference type="EnsemblBacteria" id="AAB99085">
    <property type="protein sequence ID" value="AAB99085"/>
    <property type="gene ID" value="MJ_1083"/>
</dbReference>
<dbReference type="GeneID" id="1451979"/>
<dbReference type="KEGG" id="mja:MJ_1083"/>
<dbReference type="eggNOG" id="arCOG02573">
    <property type="taxonomic scope" value="Archaea"/>
</dbReference>
<dbReference type="HOGENOM" id="CLU_050993_3_0_2"/>
<dbReference type="InParanoid" id="Q58483"/>
<dbReference type="OrthoDB" id="9059at2157"/>
<dbReference type="PhylomeDB" id="Q58483"/>
<dbReference type="Proteomes" id="UP000000805">
    <property type="component" value="Chromosome"/>
</dbReference>
<dbReference type="GO" id="GO:0051539">
    <property type="term" value="F:4 iron, 4 sulfur cluster binding"/>
    <property type="evidence" value="ECO:0007669"/>
    <property type="project" value="UniProtKB-KW"/>
</dbReference>
<dbReference type="GO" id="GO:0046872">
    <property type="term" value="F:metal ion binding"/>
    <property type="evidence" value="ECO:0007669"/>
    <property type="project" value="UniProtKB-KW"/>
</dbReference>
<dbReference type="GO" id="GO:0016491">
    <property type="term" value="F:oxidoreductase activity"/>
    <property type="evidence" value="ECO:0007669"/>
    <property type="project" value="InterPro"/>
</dbReference>
<dbReference type="Gene3D" id="3.40.50.360">
    <property type="match status" value="1"/>
</dbReference>
<dbReference type="InterPro" id="IPR029039">
    <property type="entry name" value="Flavoprotein-like_sf"/>
</dbReference>
<dbReference type="InterPro" id="IPR005025">
    <property type="entry name" value="FMN_Rdtase-like_dom"/>
</dbReference>
<dbReference type="InterPro" id="IPR051796">
    <property type="entry name" value="ISF_SsuE-like"/>
</dbReference>
<dbReference type="PANTHER" id="PTHR43278:SF1">
    <property type="entry name" value="IRON-SULFUR FLAVOPROTEIN MJ1083"/>
    <property type="match status" value="1"/>
</dbReference>
<dbReference type="PANTHER" id="PTHR43278">
    <property type="entry name" value="NAD(P)H-DEPENDENT FMN-CONTAINING OXIDOREDUCTASE YWQN-RELATED"/>
    <property type="match status" value="1"/>
</dbReference>
<dbReference type="Pfam" id="PF03358">
    <property type="entry name" value="FMN_red"/>
    <property type="match status" value="1"/>
</dbReference>
<dbReference type="SUPFAM" id="SSF52218">
    <property type="entry name" value="Flavoproteins"/>
    <property type="match status" value="1"/>
</dbReference>